<name>YNEB_BACSU</name>
<evidence type="ECO:0000255" key="1">
    <source>
        <dbReference type="PROSITE-ProRule" id="PRU01072"/>
    </source>
</evidence>
<evidence type="ECO:0000269" key="2">
    <source>
    </source>
</evidence>
<evidence type="ECO:0000305" key="3"/>
<comment type="induction">
    <text evidence="2">Repressed by LexA.</text>
</comment>
<comment type="similarity">
    <text evidence="3">Belongs to the site-specific recombinase resolvase family.</text>
</comment>
<gene>
    <name type="primary">yneB</name>
    <name type="ordered locus">BSU17870</name>
</gene>
<organism>
    <name type="scientific">Bacillus subtilis (strain 168)</name>
    <dbReference type="NCBI Taxonomy" id="224308"/>
    <lineage>
        <taxon>Bacteria</taxon>
        <taxon>Bacillati</taxon>
        <taxon>Bacillota</taxon>
        <taxon>Bacilli</taxon>
        <taxon>Bacillales</taxon>
        <taxon>Bacillaceae</taxon>
        <taxon>Bacillus</taxon>
    </lineage>
</organism>
<keyword id="KW-1185">Reference proteome</keyword>
<protein>
    <recommendedName>
        <fullName>Resolvase homolog YneB</fullName>
    </recommendedName>
</protein>
<sequence length="217" mass="24739">MKALIYARVSTNKEQQETSLKRQEEELTAIAAENGMEVVKVISEKASGYEMDRDGVFELLDEIKNADIDVILVQDETRLGRGNAKIALLHCIYREGVKVYTTAHRGELELSEADSMVLEIVSIVEEYQRKIHNMKIRRGMKRAVKNGFKPQKNLKNQHGNSGKEKIEVPISEIVRLRANKLTFAEIAATLRGFGYDVSKATVHRRFQEYIENEETAE</sequence>
<accession>Q45057</accession>
<accession>Q796G9</accession>
<reference key="1">
    <citation type="journal article" date="1996" name="Microbiology">
        <title>New genes in the 170 degrees region of the Bacillus subtilis genome encode DNA gyrase subunits, a thioredoxin, a xylanase and an amino acid transporter.</title>
        <authorList>
            <person name="Rose M."/>
            <person name="Entian K.-D."/>
        </authorList>
    </citation>
    <scope>NUCLEOTIDE SEQUENCE [GENOMIC DNA]</scope>
    <source>
        <strain>168</strain>
    </source>
</reference>
<reference key="2">
    <citation type="journal article" date="1997" name="Nature">
        <title>The complete genome sequence of the Gram-positive bacterium Bacillus subtilis.</title>
        <authorList>
            <person name="Kunst F."/>
            <person name="Ogasawara N."/>
            <person name="Moszer I."/>
            <person name="Albertini A.M."/>
            <person name="Alloni G."/>
            <person name="Azevedo V."/>
            <person name="Bertero M.G."/>
            <person name="Bessieres P."/>
            <person name="Bolotin A."/>
            <person name="Borchert S."/>
            <person name="Borriss R."/>
            <person name="Boursier L."/>
            <person name="Brans A."/>
            <person name="Braun M."/>
            <person name="Brignell S.C."/>
            <person name="Bron S."/>
            <person name="Brouillet S."/>
            <person name="Bruschi C.V."/>
            <person name="Caldwell B."/>
            <person name="Capuano V."/>
            <person name="Carter N.M."/>
            <person name="Choi S.-K."/>
            <person name="Codani J.-J."/>
            <person name="Connerton I.F."/>
            <person name="Cummings N.J."/>
            <person name="Daniel R.A."/>
            <person name="Denizot F."/>
            <person name="Devine K.M."/>
            <person name="Duesterhoeft A."/>
            <person name="Ehrlich S.D."/>
            <person name="Emmerson P.T."/>
            <person name="Entian K.-D."/>
            <person name="Errington J."/>
            <person name="Fabret C."/>
            <person name="Ferrari E."/>
            <person name="Foulger D."/>
            <person name="Fritz C."/>
            <person name="Fujita M."/>
            <person name="Fujita Y."/>
            <person name="Fuma S."/>
            <person name="Galizzi A."/>
            <person name="Galleron N."/>
            <person name="Ghim S.-Y."/>
            <person name="Glaser P."/>
            <person name="Goffeau A."/>
            <person name="Golightly E.J."/>
            <person name="Grandi G."/>
            <person name="Guiseppi G."/>
            <person name="Guy B.J."/>
            <person name="Haga K."/>
            <person name="Haiech J."/>
            <person name="Harwood C.R."/>
            <person name="Henaut A."/>
            <person name="Hilbert H."/>
            <person name="Holsappel S."/>
            <person name="Hosono S."/>
            <person name="Hullo M.-F."/>
            <person name="Itaya M."/>
            <person name="Jones L.-M."/>
            <person name="Joris B."/>
            <person name="Karamata D."/>
            <person name="Kasahara Y."/>
            <person name="Klaerr-Blanchard M."/>
            <person name="Klein C."/>
            <person name="Kobayashi Y."/>
            <person name="Koetter P."/>
            <person name="Koningstein G."/>
            <person name="Krogh S."/>
            <person name="Kumano M."/>
            <person name="Kurita K."/>
            <person name="Lapidus A."/>
            <person name="Lardinois S."/>
            <person name="Lauber J."/>
            <person name="Lazarevic V."/>
            <person name="Lee S.-M."/>
            <person name="Levine A."/>
            <person name="Liu H."/>
            <person name="Masuda S."/>
            <person name="Mauel C."/>
            <person name="Medigue C."/>
            <person name="Medina N."/>
            <person name="Mellado R.P."/>
            <person name="Mizuno M."/>
            <person name="Moestl D."/>
            <person name="Nakai S."/>
            <person name="Noback M."/>
            <person name="Noone D."/>
            <person name="O'Reilly M."/>
            <person name="Ogawa K."/>
            <person name="Ogiwara A."/>
            <person name="Oudega B."/>
            <person name="Park S.-H."/>
            <person name="Parro V."/>
            <person name="Pohl T.M."/>
            <person name="Portetelle D."/>
            <person name="Porwollik S."/>
            <person name="Prescott A.M."/>
            <person name="Presecan E."/>
            <person name="Pujic P."/>
            <person name="Purnelle B."/>
            <person name="Rapoport G."/>
            <person name="Rey M."/>
            <person name="Reynolds S."/>
            <person name="Rieger M."/>
            <person name="Rivolta C."/>
            <person name="Rocha E."/>
            <person name="Roche B."/>
            <person name="Rose M."/>
            <person name="Sadaie Y."/>
            <person name="Sato T."/>
            <person name="Scanlan E."/>
            <person name="Schleich S."/>
            <person name="Schroeter R."/>
            <person name="Scoffone F."/>
            <person name="Sekiguchi J."/>
            <person name="Sekowska A."/>
            <person name="Seror S.J."/>
            <person name="Serror P."/>
            <person name="Shin B.-S."/>
            <person name="Soldo B."/>
            <person name="Sorokin A."/>
            <person name="Tacconi E."/>
            <person name="Takagi T."/>
            <person name="Takahashi H."/>
            <person name="Takemaru K."/>
            <person name="Takeuchi M."/>
            <person name="Tamakoshi A."/>
            <person name="Tanaka T."/>
            <person name="Terpstra P."/>
            <person name="Tognoni A."/>
            <person name="Tosato V."/>
            <person name="Uchiyama S."/>
            <person name="Vandenbol M."/>
            <person name="Vannier F."/>
            <person name="Vassarotti A."/>
            <person name="Viari A."/>
            <person name="Wambutt R."/>
            <person name="Wedler E."/>
            <person name="Wedler H."/>
            <person name="Weitzenegger T."/>
            <person name="Winters P."/>
            <person name="Wipat A."/>
            <person name="Yamamoto H."/>
            <person name="Yamane K."/>
            <person name="Yasumoto K."/>
            <person name="Yata K."/>
            <person name="Yoshida K."/>
            <person name="Yoshikawa H.-F."/>
            <person name="Zumstein E."/>
            <person name="Yoshikawa H."/>
            <person name="Danchin A."/>
        </authorList>
    </citation>
    <scope>NUCLEOTIDE SEQUENCE [LARGE SCALE GENOMIC DNA]</scope>
    <source>
        <strain>168</strain>
    </source>
</reference>
<reference key="3">
    <citation type="journal article" date="2003" name="Mol. Microbiol.">
        <title>Identification of a protein, YneA, responsible for cell division suppression during the SOS response in Bacillus subtilis.</title>
        <authorList>
            <person name="Kawai Y."/>
            <person name="Moriya S."/>
            <person name="Ogasawara N."/>
        </authorList>
    </citation>
    <scope>INDUCTION</scope>
    <source>
        <strain>168</strain>
    </source>
</reference>
<dbReference type="EMBL" id="Z73234">
    <property type="protein sequence ID" value="CAA97615.1"/>
    <property type="molecule type" value="Genomic_DNA"/>
</dbReference>
<dbReference type="EMBL" id="AL009126">
    <property type="protein sequence ID" value="CAB13671.1"/>
    <property type="molecule type" value="Genomic_DNA"/>
</dbReference>
<dbReference type="PIR" id="G69890">
    <property type="entry name" value="G69890"/>
</dbReference>
<dbReference type="RefSeq" id="WP_003231596.1">
    <property type="nucleotide sequence ID" value="NZ_OZ025638.1"/>
</dbReference>
<dbReference type="SMR" id="Q45057"/>
<dbReference type="FunCoup" id="Q45057">
    <property type="interactions" value="70"/>
</dbReference>
<dbReference type="STRING" id="224308.BSU17870"/>
<dbReference type="jPOST" id="Q45057"/>
<dbReference type="PaxDb" id="224308-BSU17870"/>
<dbReference type="EnsemblBacteria" id="CAB13671">
    <property type="protein sequence ID" value="CAB13671"/>
    <property type="gene ID" value="BSU_17870"/>
</dbReference>
<dbReference type="GeneID" id="939557"/>
<dbReference type="KEGG" id="bsu:BSU17870"/>
<dbReference type="PATRIC" id="fig|224308.179.peg.1948"/>
<dbReference type="eggNOG" id="COG1961">
    <property type="taxonomic scope" value="Bacteria"/>
</dbReference>
<dbReference type="InParanoid" id="Q45057"/>
<dbReference type="OrthoDB" id="2731197at2"/>
<dbReference type="PhylomeDB" id="Q45057"/>
<dbReference type="BioCyc" id="BSUB:BSU17870-MONOMER"/>
<dbReference type="Proteomes" id="UP000001570">
    <property type="component" value="Chromosome"/>
</dbReference>
<dbReference type="GO" id="GO:0003677">
    <property type="term" value="F:DNA binding"/>
    <property type="evidence" value="ECO:0007669"/>
    <property type="project" value="InterPro"/>
</dbReference>
<dbReference type="GO" id="GO:0000150">
    <property type="term" value="F:DNA strand exchange activity"/>
    <property type="evidence" value="ECO:0000318"/>
    <property type="project" value="GO_Central"/>
</dbReference>
<dbReference type="GO" id="GO:0006310">
    <property type="term" value="P:DNA recombination"/>
    <property type="evidence" value="ECO:0000318"/>
    <property type="project" value="GO_Central"/>
</dbReference>
<dbReference type="CDD" id="cd00338">
    <property type="entry name" value="Ser_Recombinase"/>
    <property type="match status" value="1"/>
</dbReference>
<dbReference type="Gene3D" id="3.40.50.1390">
    <property type="entry name" value="Resolvase, N-terminal catalytic domain"/>
    <property type="match status" value="1"/>
</dbReference>
<dbReference type="InterPro" id="IPR006119">
    <property type="entry name" value="Resolv_N"/>
</dbReference>
<dbReference type="InterPro" id="IPR036162">
    <property type="entry name" value="Resolvase-like_N_sf"/>
</dbReference>
<dbReference type="InterPro" id="IPR050639">
    <property type="entry name" value="SSR_resolvase"/>
</dbReference>
<dbReference type="PANTHER" id="PTHR30461">
    <property type="entry name" value="DNA-INVERTASE FROM LAMBDOID PROPHAGE"/>
    <property type="match status" value="1"/>
</dbReference>
<dbReference type="PANTHER" id="PTHR30461:SF26">
    <property type="entry name" value="RESOLVASE HOMOLOG YNEB"/>
    <property type="match status" value="1"/>
</dbReference>
<dbReference type="Pfam" id="PF00239">
    <property type="entry name" value="Resolvase"/>
    <property type="match status" value="1"/>
</dbReference>
<dbReference type="SMART" id="SM00857">
    <property type="entry name" value="Resolvase"/>
    <property type="match status" value="1"/>
</dbReference>
<dbReference type="SUPFAM" id="SSF53041">
    <property type="entry name" value="Resolvase-like"/>
    <property type="match status" value="1"/>
</dbReference>
<dbReference type="PROSITE" id="PS51736">
    <property type="entry name" value="RECOMBINASES_3"/>
    <property type="match status" value="1"/>
</dbReference>
<feature type="chain" id="PRO_0000376843" description="Resolvase homolog YneB">
    <location>
        <begin position="1"/>
        <end position="217"/>
    </location>
</feature>
<feature type="domain" description="Resolvase/invertase-type recombinase catalytic" evidence="1">
    <location>
        <begin position="2"/>
        <end position="147"/>
    </location>
</feature>
<feature type="active site" description="O-(5'-phospho-DNA)-serine intermediate" evidence="1">
    <location>
        <position position="10"/>
    </location>
</feature>
<proteinExistence type="evidence at transcript level"/>